<protein>
    <recommendedName>
        <fullName evidence="1">Pyridoxine/pyridoxamine 5'-phosphate oxidase</fullName>
        <ecNumber evidence="1">1.4.3.5</ecNumber>
    </recommendedName>
    <alternativeName>
        <fullName evidence="1">PNP/PMP oxidase</fullName>
        <shortName evidence="1">PNPOx</shortName>
    </alternativeName>
    <alternativeName>
        <fullName evidence="1">Pyridoxal 5'-phosphate synthase</fullName>
    </alternativeName>
</protein>
<accession>Q4ZPN9</accession>
<comment type="function">
    <text evidence="1">Catalyzes the oxidation of either pyridoxine 5'-phosphate (PNP) or pyridoxamine 5'-phosphate (PMP) into pyridoxal 5'-phosphate (PLP).</text>
</comment>
<comment type="catalytic activity">
    <reaction evidence="1">
        <text>pyridoxamine 5'-phosphate + O2 + H2O = pyridoxal 5'-phosphate + H2O2 + NH4(+)</text>
        <dbReference type="Rhea" id="RHEA:15817"/>
        <dbReference type="ChEBI" id="CHEBI:15377"/>
        <dbReference type="ChEBI" id="CHEBI:15379"/>
        <dbReference type="ChEBI" id="CHEBI:16240"/>
        <dbReference type="ChEBI" id="CHEBI:28938"/>
        <dbReference type="ChEBI" id="CHEBI:58451"/>
        <dbReference type="ChEBI" id="CHEBI:597326"/>
        <dbReference type="EC" id="1.4.3.5"/>
    </reaction>
</comment>
<comment type="catalytic activity">
    <reaction evidence="1">
        <text>pyridoxine 5'-phosphate + O2 = pyridoxal 5'-phosphate + H2O2</text>
        <dbReference type="Rhea" id="RHEA:15149"/>
        <dbReference type="ChEBI" id="CHEBI:15379"/>
        <dbReference type="ChEBI" id="CHEBI:16240"/>
        <dbReference type="ChEBI" id="CHEBI:58589"/>
        <dbReference type="ChEBI" id="CHEBI:597326"/>
        <dbReference type="EC" id="1.4.3.5"/>
    </reaction>
</comment>
<comment type="cofactor">
    <cofactor evidence="1">
        <name>FMN</name>
        <dbReference type="ChEBI" id="CHEBI:58210"/>
    </cofactor>
    <text evidence="1">Binds 1 FMN per subunit.</text>
</comment>
<comment type="pathway">
    <text evidence="1">Cofactor metabolism; pyridoxal 5'-phosphate salvage; pyridoxal 5'-phosphate from pyridoxamine 5'-phosphate: step 1/1.</text>
</comment>
<comment type="pathway">
    <text evidence="1">Cofactor metabolism; pyridoxal 5'-phosphate salvage; pyridoxal 5'-phosphate from pyridoxine 5'-phosphate: step 1/1.</text>
</comment>
<comment type="subunit">
    <text evidence="1">Homodimer.</text>
</comment>
<comment type="similarity">
    <text evidence="1">Belongs to the pyridoxamine 5'-phosphate oxidase family.</text>
</comment>
<keyword id="KW-0285">Flavoprotein</keyword>
<keyword id="KW-0288">FMN</keyword>
<keyword id="KW-0560">Oxidoreductase</keyword>
<keyword id="KW-0664">Pyridoxine biosynthesis</keyword>
<dbReference type="EC" id="1.4.3.5" evidence="1"/>
<dbReference type="EMBL" id="CP000075">
    <property type="protein sequence ID" value="AAY38883.1"/>
    <property type="molecule type" value="Genomic_DNA"/>
</dbReference>
<dbReference type="RefSeq" id="WP_011268697.1">
    <property type="nucleotide sequence ID" value="NC_007005.1"/>
</dbReference>
<dbReference type="RefSeq" id="YP_236921.1">
    <property type="nucleotide sequence ID" value="NC_007005.1"/>
</dbReference>
<dbReference type="SMR" id="Q4ZPN9"/>
<dbReference type="STRING" id="205918.Psyr_3853"/>
<dbReference type="KEGG" id="psb:Psyr_3853"/>
<dbReference type="PATRIC" id="fig|205918.7.peg.3960"/>
<dbReference type="eggNOG" id="COG0259">
    <property type="taxonomic scope" value="Bacteria"/>
</dbReference>
<dbReference type="HOGENOM" id="CLU_032263_2_2_6"/>
<dbReference type="OrthoDB" id="9780392at2"/>
<dbReference type="UniPathway" id="UPA01068">
    <property type="reaction ID" value="UER00304"/>
</dbReference>
<dbReference type="UniPathway" id="UPA01068">
    <property type="reaction ID" value="UER00305"/>
</dbReference>
<dbReference type="Proteomes" id="UP000000426">
    <property type="component" value="Chromosome"/>
</dbReference>
<dbReference type="GO" id="GO:0010181">
    <property type="term" value="F:FMN binding"/>
    <property type="evidence" value="ECO:0007669"/>
    <property type="project" value="UniProtKB-UniRule"/>
</dbReference>
<dbReference type="GO" id="GO:0004733">
    <property type="term" value="F:pyridoxamine phosphate oxidase activity"/>
    <property type="evidence" value="ECO:0007669"/>
    <property type="project" value="UniProtKB-UniRule"/>
</dbReference>
<dbReference type="GO" id="GO:0008615">
    <property type="term" value="P:pyridoxine biosynthetic process"/>
    <property type="evidence" value="ECO:0007669"/>
    <property type="project" value="UniProtKB-KW"/>
</dbReference>
<dbReference type="FunFam" id="2.30.110.10:FF:000011">
    <property type="entry name" value="Chromosome 7, whole genome shotgun sequence"/>
    <property type="match status" value="1"/>
</dbReference>
<dbReference type="Gene3D" id="2.30.110.10">
    <property type="entry name" value="Electron Transport, Fmn-binding Protein, Chain A"/>
    <property type="match status" value="1"/>
</dbReference>
<dbReference type="HAMAP" id="MF_01629">
    <property type="entry name" value="PdxH"/>
    <property type="match status" value="1"/>
</dbReference>
<dbReference type="InterPro" id="IPR000659">
    <property type="entry name" value="Pyridox_Oxase"/>
</dbReference>
<dbReference type="InterPro" id="IPR019740">
    <property type="entry name" value="Pyridox_Oxase_CS"/>
</dbReference>
<dbReference type="InterPro" id="IPR011576">
    <property type="entry name" value="Pyridox_Oxase_N"/>
</dbReference>
<dbReference type="InterPro" id="IPR019576">
    <property type="entry name" value="Pyridoxamine_oxidase_dimer_C"/>
</dbReference>
<dbReference type="InterPro" id="IPR012349">
    <property type="entry name" value="Split_barrel_FMN-bd"/>
</dbReference>
<dbReference type="NCBIfam" id="TIGR00558">
    <property type="entry name" value="pdxH"/>
    <property type="match status" value="1"/>
</dbReference>
<dbReference type="NCBIfam" id="NF004231">
    <property type="entry name" value="PRK05679.1"/>
    <property type="match status" value="1"/>
</dbReference>
<dbReference type="PANTHER" id="PTHR10851:SF0">
    <property type="entry name" value="PYRIDOXINE-5'-PHOSPHATE OXIDASE"/>
    <property type="match status" value="1"/>
</dbReference>
<dbReference type="PANTHER" id="PTHR10851">
    <property type="entry name" value="PYRIDOXINE-5-PHOSPHATE OXIDASE"/>
    <property type="match status" value="1"/>
</dbReference>
<dbReference type="Pfam" id="PF10590">
    <property type="entry name" value="PNP_phzG_C"/>
    <property type="match status" value="1"/>
</dbReference>
<dbReference type="Pfam" id="PF01243">
    <property type="entry name" value="PNPOx_N"/>
    <property type="match status" value="1"/>
</dbReference>
<dbReference type="PIRSF" id="PIRSF000190">
    <property type="entry name" value="Pyd_amn-ph_oxd"/>
    <property type="match status" value="1"/>
</dbReference>
<dbReference type="SUPFAM" id="SSF50475">
    <property type="entry name" value="FMN-binding split barrel"/>
    <property type="match status" value="1"/>
</dbReference>
<dbReference type="PROSITE" id="PS01064">
    <property type="entry name" value="PYRIDOX_OXIDASE"/>
    <property type="match status" value="1"/>
</dbReference>
<evidence type="ECO:0000255" key="1">
    <source>
        <dbReference type="HAMAP-Rule" id="MF_01629"/>
    </source>
</evidence>
<sequence>MTQTLADMRRDYTRDGLTEAQSPDEPFALFHAWFADAVNTEQPPVEANAMTLATVDEEGRPHCRVLLLKGLDTQGFTFFTNYESAKGQQLAARPFAAMTFFWPTLERQVRIEGRVEKVSAQESDAYYQVRPLGSRLGAWASPQSRVIADRDELEGLIRQTEQRFADTRPHCPEHWGGYRLLPERIEFWQGRSSRLHDRLNYRLIDDRWTRERLAP</sequence>
<gene>
    <name evidence="1" type="primary">pdxH</name>
    <name type="ordered locus">Psyr_3853</name>
</gene>
<name>PDXH_PSEU2</name>
<organism>
    <name type="scientific">Pseudomonas syringae pv. syringae (strain B728a)</name>
    <dbReference type="NCBI Taxonomy" id="205918"/>
    <lineage>
        <taxon>Bacteria</taxon>
        <taxon>Pseudomonadati</taxon>
        <taxon>Pseudomonadota</taxon>
        <taxon>Gammaproteobacteria</taxon>
        <taxon>Pseudomonadales</taxon>
        <taxon>Pseudomonadaceae</taxon>
        <taxon>Pseudomonas</taxon>
        <taxon>Pseudomonas syringae</taxon>
    </lineage>
</organism>
<feature type="chain" id="PRO_0000167740" description="Pyridoxine/pyridoxamine 5'-phosphate oxidase">
    <location>
        <begin position="1"/>
        <end position="215"/>
    </location>
</feature>
<feature type="binding site" evidence="1">
    <location>
        <begin position="9"/>
        <end position="12"/>
    </location>
    <ligand>
        <name>substrate</name>
    </ligand>
</feature>
<feature type="binding site" evidence="1">
    <location>
        <begin position="64"/>
        <end position="69"/>
    </location>
    <ligand>
        <name>FMN</name>
        <dbReference type="ChEBI" id="CHEBI:58210"/>
    </ligand>
</feature>
<feature type="binding site" evidence="1">
    <location>
        <position position="69"/>
    </location>
    <ligand>
        <name>substrate</name>
    </ligand>
</feature>
<feature type="binding site" evidence="1">
    <location>
        <begin position="79"/>
        <end position="80"/>
    </location>
    <ligand>
        <name>FMN</name>
        <dbReference type="ChEBI" id="CHEBI:58210"/>
    </ligand>
</feature>
<feature type="binding site" evidence="1">
    <location>
        <position position="86"/>
    </location>
    <ligand>
        <name>FMN</name>
        <dbReference type="ChEBI" id="CHEBI:58210"/>
    </ligand>
</feature>
<feature type="binding site" evidence="1">
    <location>
        <position position="108"/>
    </location>
    <ligand>
        <name>FMN</name>
        <dbReference type="ChEBI" id="CHEBI:58210"/>
    </ligand>
</feature>
<feature type="binding site" evidence="1">
    <location>
        <position position="126"/>
    </location>
    <ligand>
        <name>substrate</name>
    </ligand>
</feature>
<feature type="binding site" evidence="1">
    <location>
        <position position="130"/>
    </location>
    <ligand>
        <name>substrate</name>
    </ligand>
</feature>
<feature type="binding site" evidence="1">
    <location>
        <position position="134"/>
    </location>
    <ligand>
        <name>substrate</name>
    </ligand>
</feature>
<feature type="binding site" evidence="1">
    <location>
        <begin position="143"/>
        <end position="144"/>
    </location>
    <ligand>
        <name>FMN</name>
        <dbReference type="ChEBI" id="CHEBI:58210"/>
    </ligand>
</feature>
<feature type="binding site" evidence="1">
    <location>
        <position position="188"/>
    </location>
    <ligand>
        <name>FMN</name>
        <dbReference type="ChEBI" id="CHEBI:58210"/>
    </ligand>
</feature>
<feature type="binding site" evidence="1">
    <location>
        <begin position="194"/>
        <end position="196"/>
    </location>
    <ligand>
        <name>substrate</name>
    </ligand>
</feature>
<feature type="binding site" evidence="1">
    <location>
        <position position="198"/>
    </location>
    <ligand>
        <name>FMN</name>
        <dbReference type="ChEBI" id="CHEBI:58210"/>
    </ligand>
</feature>
<reference key="1">
    <citation type="journal article" date="2005" name="Proc. Natl. Acad. Sci. U.S.A.">
        <title>Comparison of the complete genome sequences of Pseudomonas syringae pv. syringae B728a and pv. tomato DC3000.</title>
        <authorList>
            <person name="Feil H."/>
            <person name="Feil W.S."/>
            <person name="Chain P."/>
            <person name="Larimer F."/>
            <person name="Dibartolo G."/>
            <person name="Copeland A."/>
            <person name="Lykidis A."/>
            <person name="Trong S."/>
            <person name="Nolan M."/>
            <person name="Goltsman E."/>
            <person name="Thiel J."/>
            <person name="Malfatti S."/>
            <person name="Loper J.E."/>
            <person name="Lapidus A."/>
            <person name="Detter J.C."/>
            <person name="Land M."/>
            <person name="Richardson P.M."/>
            <person name="Kyrpides N.C."/>
            <person name="Ivanova N."/>
            <person name="Lindow S.E."/>
        </authorList>
    </citation>
    <scope>NUCLEOTIDE SEQUENCE [LARGE SCALE GENOMIC DNA]</scope>
    <source>
        <strain>B728a</strain>
    </source>
</reference>
<proteinExistence type="inferred from homology"/>